<organism>
    <name type="scientific">Arabidopsis thaliana</name>
    <name type="common">Mouse-ear cress</name>
    <dbReference type="NCBI Taxonomy" id="3702"/>
    <lineage>
        <taxon>Eukaryota</taxon>
        <taxon>Viridiplantae</taxon>
        <taxon>Streptophyta</taxon>
        <taxon>Embryophyta</taxon>
        <taxon>Tracheophyta</taxon>
        <taxon>Spermatophyta</taxon>
        <taxon>Magnoliopsida</taxon>
        <taxon>eudicotyledons</taxon>
        <taxon>Gunneridae</taxon>
        <taxon>Pentapetalae</taxon>
        <taxon>rosids</taxon>
        <taxon>malvids</taxon>
        <taxon>Brassicales</taxon>
        <taxon>Brassicaceae</taxon>
        <taxon>Camelineae</taxon>
        <taxon>Arabidopsis</taxon>
    </lineage>
</organism>
<sequence>MMSNGGDSSEIVRELEELKLKKAEIEHRISTLEAKLQDTAAVELYDAVSNGDSYLTAPELEHGLSPDQIYRYSRQLLLPSFAVEGQSNLLKSSVLVIGAGGLGSPALLYLAACGVGQLGIIDHDVVELNNMHRQIIHTEAFIGHPKVKSAAAACRSINSTIKVDEYVEALRTSNALEILSQYDIIVDATDNPPSRYMISDCCVLLGKPLVSGAALGMEGQLTVYNHNGGPCYRCLFPTPPPTSACQRCSDSGVLGVVPGVIGCLQALETIKLASLVGEPLSERMLLFDALSARMRIVKIRGRSSQCTVCGDNSSFNKQTFKDFDYEDFTQFPLFAGPLNLLPAESRISSKEFKEILQKKEQHVLLDVRPSHHYKIVSLPDSLNIPLANLETRLNELTSALKEKGNGHANTESCTNPSVFVVCRRGNDSQRAVQYLRESGFDSAKDIIGGLEAWAANVNPNFPTY</sequence>
<reference key="1">
    <citation type="submission" date="1999-01" db="EMBL/GenBank/DDBJ databases">
        <title>Isolation and sequencing of a genomic region coding for the MPT-synthase-sulphurylase (Cnx5) in A.thaliana.</title>
        <authorList>
            <person name="Nieder J."/>
            <person name="Gutzke G."/>
            <person name="Mendel R.R."/>
        </authorList>
    </citation>
    <scope>NUCLEOTIDE SEQUENCE [GENOMIC DNA]</scope>
    <source>
        <strain>cv. Columbia</strain>
    </source>
</reference>
<reference key="2">
    <citation type="book" date="1997" name="Sulphur Metabolism in Higher Plants">
        <title>Molybdenum cofactor biosynthesis: identification of A.thaliana cDNAs homologous to the E.coli sulfotransferase MoeB.</title>
        <editorList>
            <person name="Cram W.J."/>
            <person name="de Kok L.J."/>
            <person name="Stulen I."/>
            <person name="Brunold C."/>
            <person name="Rennenberg H."/>
        </editorList>
        <authorList>
            <person name="Nieder J."/>
            <person name="Stallmeyer B."/>
            <person name="Brinkmann H."/>
            <person name="Mendel R.R."/>
        </authorList>
    </citation>
    <scope>NUCLEOTIDE SEQUENCE [MRNA] (ISOFORM 1)</scope>
    <source>
        <strain>cv. Columbia</strain>
    </source>
</reference>
<reference key="3">
    <citation type="journal article" date="1998" name="DNA Res.">
        <title>Structural analysis of Arabidopsis thaliana chromosome 5. IV. Sequence features of the regions of 1,456,315 bp covered by nineteen physically assigned P1 and TAC clones.</title>
        <authorList>
            <person name="Sato S."/>
            <person name="Kaneko T."/>
            <person name="Kotani H."/>
            <person name="Nakamura Y."/>
            <person name="Asamizu E."/>
            <person name="Miyajima N."/>
            <person name="Tabata S."/>
        </authorList>
    </citation>
    <scope>NUCLEOTIDE SEQUENCE [LARGE SCALE GENOMIC DNA]</scope>
    <source>
        <strain>cv. Columbia</strain>
    </source>
</reference>
<reference key="4">
    <citation type="journal article" date="2017" name="Plant J.">
        <title>Araport11: a complete reannotation of the Arabidopsis thaliana reference genome.</title>
        <authorList>
            <person name="Cheng C.Y."/>
            <person name="Krishnakumar V."/>
            <person name="Chan A.P."/>
            <person name="Thibaud-Nissen F."/>
            <person name="Schobel S."/>
            <person name="Town C.D."/>
        </authorList>
    </citation>
    <scope>GENOME REANNOTATION</scope>
    <source>
        <strain>cv. Columbia</strain>
    </source>
</reference>
<reference key="5">
    <citation type="journal article" date="2004" name="Genome Res.">
        <title>Whole genome sequence comparisons and 'full-length' cDNA sequences: a combined approach to evaluate and improve Arabidopsis genome annotation.</title>
        <authorList>
            <person name="Castelli V."/>
            <person name="Aury J.-M."/>
            <person name="Jaillon O."/>
            <person name="Wincker P."/>
            <person name="Clepet C."/>
            <person name="Menard M."/>
            <person name="Cruaud C."/>
            <person name="Quetier F."/>
            <person name="Scarpelli C."/>
            <person name="Schaechter V."/>
            <person name="Temple G."/>
            <person name="Caboche M."/>
            <person name="Weissenbach J."/>
            <person name="Salanoubat M."/>
        </authorList>
    </citation>
    <scope>NUCLEOTIDE SEQUENCE [LARGE SCALE MRNA] (ISOFORM 1)</scope>
    <source>
        <strain>cv. Columbia</strain>
    </source>
</reference>
<reference key="6">
    <citation type="journal article" date="2009" name="DNA Res.">
        <title>Analysis of multiple occurrences of alternative splicing events in Arabidopsis thaliana using novel sequenced full-length cDNAs.</title>
        <authorList>
            <person name="Iida K."/>
            <person name="Fukami-Kobayashi K."/>
            <person name="Toyoda A."/>
            <person name="Sakaki Y."/>
            <person name="Kobayashi M."/>
            <person name="Seki M."/>
            <person name="Shinozaki K."/>
        </authorList>
    </citation>
    <scope>NUCLEOTIDE SEQUENCE [LARGE SCALE MRNA] (ISOFORM 2)</scope>
    <source>
        <strain>cv. Columbia</strain>
        <tissue>Rosette leaf</tissue>
    </source>
</reference>
<reference key="7">
    <citation type="journal article" date="2007" name="Plant Physiol. Biochem.">
        <title>Differential expression of Arabidopsis sulfurtransferases under various growth conditions.</title>
        <authorList>
            <person name="Bartels A."/>
            <person name="Mock H.P."/>
            <person name="Papenbrock J."/>
        </authorList>
    </citation>
    <scope>GENE FAMILY</scope>
</reference>
<feature type="chain" id="PRO_0000120584" description="Adenylyltransferase and sulfurtransferase MOCS3">
    <location>
        <begin position="1"/>
        <end position="464"/>
    </location>
</feature>
<feature type="domain" description="Rhodanese" evidence="1">
    <location>
        <begin position="358"/>
        <end position="462"/>
    </location>
</feature>
<feature type="active site" description="Glycyl thioester intermediate; for adenylyltransferase activity" evidence="1">
    <location>
        <position position="248"/>
    </location>
</feature>
<feature type="active site" description="Cysteine persulfide intermediate; for sulfurtransferase activity" evidence="1">
    <location>
        <position position="422"/>
    </location>
</feature>
<feature type="binding site" evidence="1">
    <location>
        <position position="101"/>
    </location>
    <ligand>
        <name>ATP</name>
        <dbReference type="ChEBI" id="CHEBI:30616"/>
    </ligand>
</feature>
<feature type="binding site" evidence="1">
    <location>
        <position position="122"/>
    </location>
    <ligand>
        <name>ATP</name>
        <dbReference type="ChEBI" id="CHEBI:30616"/>
    </ligand>
</feature>
<feature type="binding site" evidence="1">
    <location>
        <begin position="129"/>
        <end position="133"/>
    </location>
    <ligand>
        <name>ATP</name>
        <dbReference type="ChEBI" id="CHEBI:30616"/>
    </ligand>
</feature>
<feature type="binding site" evidence="1">
    <location>
        <position position="146"/>
    </location>
    <ligand>
        <name>ATP</name>
        <dbReference type="ChEBI" id="CHEBI:30616"/>
    </ligand>
</feature>
<feature type="binding site" evidence="1">
    <location>
        <begin position="190"/>
        <end position="191"/>
    </location>
    <ligand>
        <name>ATP</name>
        <dbReference type="ChEBI" id="CHEBI:30616"/>
    </ligand>
</feature>
<feature type="binding site" evidence="1">
    <location>
        <position position="231"/>
    </location>
    <ligand>
        <name>Zn(2+)</name>
        <dbReference type="ChEBI" id="CHEBI:29105"/>
    </ligand>
</feature>
<feature type="binding site" evidence="1">
    <location>
        <position position="234"/>
    </location>
    <ligand>
        <name>Zn(2+)</name>
        <dbReference type="ChEBI" id="CHEBI:29105"/>
    </ligand>
</feature>
<feature type="binding site" evidence="1">
    <location>
        <position position="306"/>
    </location>
    <ligand>
        <name>Zn(2+)</name>
        <dbReference type="ChEBI" id="CHEBI:29105"/>
    </ligand>
</feature>
<feature type="binding site" evidence="1">
    <location>
        <position position="309"/>
    </location>
    <ligand>
        <name>Zn(2+)</name>
        <dbReference type="ChEBI" id="CHEBI:29105"/>
    </ligand>
</feature>
<feature type="splice variant" id="VSP_042632" description="In isoform 2." evidence="2">
    <location>
        <begin position="85"/>
        <end position="111"/>
    </location>
</feature>
<accession>Q9ZNW0</accession>
<accession>B9DGV4</accession>
<accession>Q058R2</accession>
<name>MOCS3_ARATH</name>
<proteinExistence type="evidence at transcript level"/>
<gene>
    <name evidence="1" type="primary">MOCS3</name>
    <name evidence="1" type="synonym">CNX5</name>
    <name type="synonym">STR13</name>
    <name evidence="1" type="synonym">UBA4</name>
    <name type="ordered locus">At5g55130</name>
    <name type="ORF">MCO15.8</name>
</gene>
<keyword id="KW-0025">Alternative splicing</keyword>
<keyword id="KW-0067">ATP-binding</keyword>
<keyword id="KW-0963">Cytoplasm</keyword>
<keyword id="KW-0479">Metal-binding</keyword>
<keyword id="KW-0501">Molybdenum cofactor biosynthesis</keyword>
<keyword id="KW-0511">Multifunctional enzyme</keyword>
<keyword id="KW-0547">Nucleotide-binding</keyword>
<keyword id="KW-1185">Reference proteome</keyword>
<keyword id="KW-0808">Transferase</keyword>
<keyword id="KW-0819">tRNA processing</keyword>
<keyword id="KW-0862">Zinc</keyword>
<protein>
    <recommendedName>
        <fullName evidence="1">Adenylyltransferase and sulfurtransferase MOCS3</fullName>
    </recommendedName>
    <alternativeName>
        <fullName evidence="1">Molybdenum cofactor synthesis protein 3</fullName>
    </alternativeName>
    <domain>
        <recommendedName>
            <fullName evidence="1">Molybdopterin-synthase adenylyltransferase</fullName>
            <ecNumber evidence="1">2.7.7.80</ecNumber>
        </recommendedName>
        <alternativeName>
            <fullName evidence="1">Adenylyltransferase MOCS3</fullName>
        </alternativeName>
        <alternativeName>
            <fullName evidence="1">Sulfur carrier protein MOCS2A adenylyltransferase</fullName>
        </alternativeName>
    </domain>
    <domain>
        <recommendedName>
            <fullName evidence="1">Molybdopterin-synthase sulfurtransferase</fullName>
            <ecNumber evidence="1">2.8.1.11</ecNumber>
        </recommendedName>
        <alternativeName>
            <fullName evidence="1">Sulfur carrier protein MOCS2A sulfurtransferase</fullName>
        </alternativeName>
        <alternativeName>
            <fullName evidence="1">Sulfurtransferase 13</fullName>
            <shortName>AtStr13</shortName>
        </alternativeName>
        <alternativeName>
            <fullName evidence="1">Sulfurtransferase MOCS3</fullName>
        </alternativeName>
    </domain>
</protein>
<comment type="function">
    <text evidence="1">Plays a central role in 2-thiolation of mcm(5)S(2)U at tRNA wobble positions of cytosolic tRNA(Lys), tRNA(Glu) and tRNA(Gln). Also essential during biosynthesis of the molybdenum cofactor. Acts by mediating the C-terminal thiocarboxylation of sulfur carriers URM1 and MOCS2A. Its N-terminus first activates URM1 and MOCS2A as acyl-adenylates (-COAMP), then the persulfide sulfur on the catalytic cysteine is transferred to URM1 and MOCS2A to form thiocarboxylation (-COSH) of their C-terminus. The reaction probably involves hydrogen sulfide that is generated from the persulfide intermediate and that acts as a nucleophile towards URM1 and MOCS2A. Subsequently, a transient disulfide bond is formed. Does not use thiosulfate as sulfur donor; NFS1 probably acting as a sulfur donor for thiocarboxylation reactions.</text>
</comment>
<comment type="catalytic activity">
    <reaction evidence="1">
        <text>[molybdopterin-synthase sulfur-carrier protein]-C-terminal Gly-Gly + ATP + H(+) = [molybdopterin-synthase sulfur-carrier protein]-C-terminal Gly-Gly-AMP + diphosphate</text>
        <dbReference type="Rhea" id="RHEA:43616"/>
        <dbReference type="Rhea" id="RHEA-COMP:12159"/>
        <dbReference type="Rhea" id="RHEA-COMP:12202"/>
        <dbReference type="ChEBI" id="CHEBI:15378"/>
        <dbReference type="ChEBI" id="CHEBI:30616"/>
        <dbReference type="ChEBI" id="CHEBI:33019"/>
        <dbReference type="ChEBI" id="CHEBI:90618"/>
        <dbReference type="ChEBI" id="CHEBI:90778"/>
        <dbReference type="EC" id="2.7.7.80"/>
    </reaction>
</comment>
<comment type="catalytic activity">
    <reaction evidence="1">
        <text>[molybdopterin-synthase sulfur-carrier protein]-C-terminal Gly-Gly-AMP + S-sulfanyl-L-cysteinyl-[cysteine desulfurase] + AH2 = [molybdopterin-synthase sulfur-carrier protein]-C-terminal-Gly-aminoethanethioate + L-cysteinyl-[cysteine desulfurase] + A + AMP + 2 H(+)</text>
        <dbReference type="Rhea" id="RHEA:48612"/>
        <dbReference type="Rhea" id="RHEA-COMP:12157"/>
        <dbReference type="Rhea" id="RHEA-COMP:12158"/>
        <dbReference type="Rhea" id="RHEA-COMP:12159"/>
        <dbReference type="Rhea" id="RHEA-COMP:19907"/>
        <dbReference type="ChEBI" id="CHEBI:13193"/>
        <dbReference type="ChEBI" id="CHEBI:15378"/>
        <dbReference type="ChEBI" id="CHEBI:17499"/>
        <dbReference type="ChEBI" id="CHEBI:29950"/>
        <dbReference type="ChEBI" id="CHEBI:61963"/>
        <dbReference type="ChEBI" id="CHEBI:90618"/>
        <dbReference type="ChEBI" id="CHEBI:232372"/>
        <dbReference type="ChEBI" id="CHEBI:456215"/>
        <dbReference type="EC" id="2.8.1.11"/>
    </reaction>
</comment>
<comment type="cofactor">
    <cofactor evidence="1">
        <name>Zn(2+)</name>
        <dbReference type="ChEBI" id="CHEBI:29105"/>
    </cofactor>
    <text evidence="1">Binds 1 zinc ion per subunit.</text>
</comment>
<comment type="pathway">
    <text evidence="1">tRNA modification; 5-methoxycarbonylmethyl-2-thiouridine-tRNA biosynthesis.</text>
</comment>
<comment type="pathway">
    <text evidence="1">Cofactor biosynthesis; molybdopterin biosynthesis.</text>
</comment>
<comment type="subcellular location">
    <subcellularLocation>
        <location evidence="1">Cytoplasm</location>
    </subcellularLocation>
</comment>
<comment type="alternative products">
    <event type="alternative splicing"/>
    <isoform>
        <id>Q9ZNW0-1</id>
        <name>1</name>
        <sequence type="displayed"/>
    </isoform>
    <isoform>
        <id>Q9ZNW0-2</id>
        <name>2</name>
        <sequence type="described" ref="VSP_042632"/>
    </isoform>
</comment>
<comment type="similarity">
    <text evidence="1">In the N-terminal section; belongs to the HesA/MoeB/ThiF family. UBA4 subfamily.</text>
</comment>
<evidence type="ECO:0000255" key="1">
    <source>
        <dbReference type="HAMAP-Rule" id="MF_03049"/>
    </source>
</evidence>
<evidence type="ECO:0000303" key="2">
    <source>
    </source>
</evidence>
<dbReference type="EC" id="2.7.7.80" evidence="1"/>
<dbReference type="EC" id="2.8.1.11" evidence="1"/>
<dbReference type="EMBL" id="AF124160">
    <property type="protein sequence ID" value="AAD18051.1"/>
    <property type="molecule type" value="Genomic_DNA"/>
</dbReference>
<dbReference type="EMBL" id="AF124159">
    <property type="protein sequence ID" value="AAD18050.1"/>
    <property type="molecule type" value="mRNA"/>
</dbReference>
<dbReference type="EMBL" id="AB010071">
    <property type="protein sequence ID" value="BAB08582.1"/>
    <property type="molecule type" value="Genomic_DNA"/>
</dbReference>
<dbReference type="EMBL" id="CP002688">
    <property type="protein sequence ID" value="AED96586.1"/>
    <property type="molecule type" value="Genomic_DNA"/>
</dbReference>
<dbReference type="EMBL" id="CP002688">
    <property type="protein sequence ID" value="AED96587.1"/>
    <property type="molecule type" value="Genomic_DNA"/>
</dbReference>
<dbReference type="EMBL" id="BT029156">
    <property type="protein sequence ID" value="ABJ17091.1"/>
    <property type="molecule type" value="mRNA"/>
</dbReference>
<dbReference type="EMBL" id="AK317295">
    <property type="protein sequence ID" value="BAH19971.1"/>
    <property type="molecule type" value="mRNA"/>
</dbReference>
<dbReference type="RefSeq" id="NP_001032076.1">
    <molecule id="Q9ZNW0-2"/>
    <property type="nucleotide sequence ID" value="NM_001036999.1"/>
</dbReference>
<dbReference type="RefSeq" id="NP_200324.1">
    <molecule id="Q9ZNW0-1"/>
    <property type="nucleotide sequence ID" value="NM_124895.3"/>
</dbReference>
<dbReference type="SMR" id="Q9ZNW0"/>
<dbReference type="FunCoup" id="Q9ZNW0">
    <property type="interactions" value="3243"/>
</dbReference>
<dbReference type="STRING" id="3702.Q9ZNW0"/>
<dbReference type="GlyGen" id="Q9ZNW0">
    <property type="glycosylation" value="2 sites"/>
</dbReference>
<dbReference type="PaxDb" id="3702-AT5G55130.1"/>
<dbReference type="ProteomicsDB" id="238299">
    <molecule id="Q9ZNW0-1"/>
</dbReference>
<dbReference type="EnsemblPlants" id="AT5G55130.1">
    <molecule id="Q9ZNW0-1"/>
    <property type="protein sequence ID" value="AT5G55130.1"/>
    <property type="gene ID" value="AT5G55130"/>
</dbReference>
<dbReference type="EnsemblPlants" id="AT5G55130.2">
    <molecule id="Q9ZNW0-2"/>
    <property type="protein sequence ID" value="AT5G55130.2"/>
    <property type="gene ID" value="AT5G55130"/>
</dbReference>
<dbReference type="GeneID" id="835604"/>
<dbReference type="Gramene" id="AT5G55130.1">
    <molecule id="Q9ZNW0-1"/>
    <property type="protein sequence ID" value="AT5G55130.1"/>
    <property type="gene ID" value="AT5G55130"/>
</dbReference>
<dbReference type="Gramene" id="AT5G55130.2">
    <molecule id="Q9ZNW0-2"/>
    <property type="protein sequence ID" value="AT5G55130.2"/>
    <property type="gene ID" value="AT5G55130"/>
</dbReference>
<dbReference type="KEGG" id="ath:AT5G55130"/>
<dbReference type="Araport" id="AT5G55130"/>
<dbReference type="TAIR" id="AT5G55130">
    <property type="gene designation" value="CNX5"/>
</dbReference>
<dbReference type="eggNOG" id="KOG2017">
    <property type="taxonomic scope" value="Eukaryota"/>
</dbReference>
<dbReference type="HOGENOM" id="CLU_013325_1_2_1"/>
<dbReference type="InParanoid" id="Q9ZNW0"/>
<dbReference type="OrthoDB" id="10261062at2759"/>
<dbReference type="PhylomeDB" id="Q9ZNW0"/>
<dbReference type="UniPathway" id="UPA00344"/>
<dbReference type="UniPathway" id="UPA00988"/>
<dbReference type="PRO" id="PR:Q9ZNW0"/>
<dbReference type="Proteomes" id="UP000006548">
    <property type="component" value="Chromosome 5"/>
</dbReference>
<dbReference type="ExpressionAtlas" id="Q9ZNW0">
    <property type="expression patterns" value="baseline and differential"/>
</dbReference>
<dbReference type="GO" id="GO:0005829">
    <property type="term" value="C:cytosol"/>
    <property type="evidence" value="ECO:0007669"/>
    <property type="project" value="InterPro"/>
</dbReference>
<dbReference type="GO" id="GO:0005524">
    <property type="term" value="F:ATP binding"/>
    <property type="evidence" value="ECO:0007669"/>
    <property type="project" value="UniProtKB-KW"/>
</dbReference>
<dbReference type="GO" id="GO:0046872">
    <property type="term" value="F:metal ion binding"/>
    <property type="evidence" value="ECO:0007669"/>
    <property type="project" value="UniProtKB-KW"/>
</dbReference>
<dbReference type="GO" id="GO:0008265">
    <property type="term" value="F:molybdenum cofactor sulfurtransferase activity"/>
    <property type="evidence" value="ECO:0000250"/>
    <property type="project" value="TAIR"/>
</dbReference>
<dbReference type="GO" id="GO:0061605">
    <property type="term" value="F:molybdopterin-synthase adenylyltransferase activity"/>
    <property type="evidence" value="ECO:0007669"/>
    <property type="project" value="UniProtKB-EC"/>
</dbReference>
<dbReference type="GO" id="GO:0061604">
    <property type="term" value="F:molybdopterin-synthase sulfurtransferase activity"/>
    <property type="evidence" value="ECO:0007669"/>
    <property type="project" value="UniProtKB-EC"/>
</dbReference>
<dbReference type="GO" id="GO:0008641">
    <property type="term" value="F:ubiquitin-like modifier activating enzyme activity"/>
    <property type="evidence" value="ECO:0007669"/>
    <property type="project" value="InterPro"/>
</dbReference>
<dbReference type="GO" id="GO:0006777">
    <property type="term" value="P:Mo-molybdopterin cofactor biosynthetic process"/>
    <property type="evidence" value="ECO:0007669"/>
    <property type="project" value="UniProtKB-UniRule"/>
</dbReference>
<dbReference type="GO" id="GO:0002143">
    <property type="term" value="P:tRNA wobble position uridine thiolation"/>
    <property type="evidence" value="ECO:0007669"/>
    <property type="project" value="InterPro"/>
</dbReference>
<dbReference type="CDD" id="cd01526">
    <property type="entry name" value="RHOD_ThiF"/>
    <property type="match status" value="1"/>
</dbReference>
<dbReference type="CDD" id="cd00757">
    <property type="entry name" value="ThiF_MoeB_HesA_family"/>
    <property type="match status" value="1"/>
</dbReference>
<dbReference type="FunFam" id="3.40.250.10:FF:000014">
    <property type="entry name" value="Adenylyltransferase and sulfurtransferase MOCS3"/>
    <property type="match status" value="1"/>
</dbReference>
<dbReference type="FunFam" id="3.40.50.720:FF:000033">
    <property type="entry name" value="Adenylyltransferase and sulfurtransferase MOCS3"/>
    <property type="match status" value="1"/>
</dbReference>
<dbReference type="Gene3D" id="3.40.50.720">
    <property type="entry name" value="NAD(P)-binding Rossmann-like Domain"/>
    <property type="match status" value="1"/>
</dbReference>
<dbReference type="Gene3D" id="3.40.250.10">
    <property type="entry name" value="Rhodanese-like domain"/>
    <property type="match status" value="1"/>
</dbReference>
<dbReference type="HAMAP" id="MF_03049">
    <property type="entry name" value="MOCS3_Uba4"/>
    <property type="match status" value="1"/>
</dbReference>
<dbReference type="InterPro" id="IPR028885">
    <property type="entry name" value="MOCS3/Uba4"/>
</dbReference>
<dbReference type="InterPro" id="IPR001763">
    <property type="entry name" value="Rhodanese-like_dom"/>
</dbReference>
<dbReference type="InterPro" id="IPR036873">
    <property type="entry name" value="Rhodanese-like_dom_sf"/>
</dbReference>
<dbReference type="InterPro" id="IPR045886">
    <property type="entry name" value="ThiF/MoeB/HesA"/>
</dbReference>
<dbReference type="InterPro" id="IPR000594">
    <property type="entry name" value="ThiF_NAD_FAD-bd"/>
</dbReference>
<dbReference type="InterPro" id="IPR035985">
    <property type="entry name" value="Ubiquitin-activating_enz"/>
</dbReference>
<dbReference type="NCBIfam" id="NF004281">
    <property type="entry name" value="PRK05690.1"/>
    <property type="match status" value="1"/>
</dbReference>
<dbReference type="PANTHER" id="PTHR10953:SF102">
    <property type="entry name" value="ADENYLYLTRANSFERASE AND SULFURTRANSFERASE MOCS3"/>
    <property type="match status" value="1"/>
</dbReference>
<dbReference type="PANTHER" id="PTHR10953">
    <property type="entry name" value="UBIQUITIN-ACTIVATING ENZYME E1"/>
    <property type="match status" value="1"/>
</dbReference>
<dbReference type="Pfam" id="PF00581">
    <property type="entry name" value="Rhodanese"/>
    <property type="match status" value="1"/>
</dbReference>
<dbReference type="Pfam" id="PF00899">
    <property type="entry name" value="ThiF"/>
    <property type="match status" value="1"/>
</dbReference>
<dbReference type="SMART" id="SM00450">
    <property type="entry name" value="RHOD"/>
    <property type="match status" value="1"/>
</dbReference>
<dbReference type="SUPFAM" id="SSF69572">
    <property type="entry name" value="Activating enzymes of the ubiquitin-like proteins"/>
    <property type="match status" value="1"/>
</dbReference>
<dbReference type="PROSITE" id="PS50206">
    <property type="entry name" value="RHODANESE_3"/>
    <property type="match status" value="1"/>
</dbReference>